<comment type="function">
    <text evidence="1">Catalyzes the condensation of iminoaspartate with dihydroxyacetone phosphate to form quinolinate.</text>
</comment>
<comment type="catalytic activity">
    <reaction evidence="1">
        <text>iminosuccinate + dihydroxyacetone phosphate = quinolinate + phosphate + 2 H2O + H(+)</text>
        <dbReference type="Rhea" id="RHEA:25888"/>
        <dbReference type="ChEBI" id="CHEBI:15377"/>
        <dbReference type="ChEBI" id="CHEBI:15378"/>
        <dbReference type="ChEBI" id="CHEBI:29959"/>
        <dbReference type="ChEBI" id="CHEBI:43474"/>
        <dbReference type="ChEBI" id="CHEBI:57642"/>
        <dbReference type="ChEBI" id="CHEBI:77875"/>
        <dbReference type="EC" id="2.5.1.72"/>
    </reaction>
    <physiologicalReaction direction="left-to-right" evidence="1">
        <dbReference type="Rhea" id="RHEA:25889"/>
    </physiologicalReaction>
</comment>
<comment type="cofactor">
    <cofactor evidence="1">
        <name>[4Fe-4S] cluster</name>
        <dbReference type="ChEBI" id="CHEBI:49883"/>
    </cofactor>
    <text evidence="1">Binds 1 [4Fe-4S] cluster per subunit.</text>
</comment>
<comment type="pathway">
    <text evidence="1">Cofactor biosynthesis; NAD(+) biosynthesis; quinolinate from iminoaspartate: step 1/1.</text>
</comment>
<comment type="subcellular location">
    <subcellularLocation>
        <location evidence="1">Cytoplasm</location>
    </subcellularLocation>
</comment>
<comment type="similarity">
    <text evidence="1">Belongs to the quinolinate synthase family. Type 2 subfamily.</text>
</comment>
<proteinExistence type="inferred from homology"/>
<protein>
    <recommendedName>
        <fullName evidence="1">Quinolinate synthase</fullName>
        <ecNumber evidence="1">2.5.1.72</ecNumber>
    </recommendedName>
</protein>
<sequence length="308" mass="34496">MNNNELIEKINKLRKEKNAIILAHYYQRPEIQDIADFIGDSLELSRIAQKSDADIIVFCGVRFMAETAKILNPTKKVLHPNPESGCPMADMATLEGVKKLKQEHPDAVVVSYINTNADVKTVSDVIVTSRNAVKVVKSLDAKKIIFVPDQFLGSYIARQVPEKEFILWKGFCPPHFNLSKETLLELKQRYPEAKIAVHPECNTDTVEIADFVGSTTQIIEYATTCDADTVIIGTEVGILHALKKKNPNKNYVFPQSADYCGTVHCCDMKKNTLDKVLEVLEKETNEIILPSEIIQKAVIPLERMLAVA</sequence>
<keyword id="KW-0004">4Fe-4S</keyword>
<keyword id="KW-0963">Cytoplasm</keyword>
<keyword id="KW-0408">Iron</keyword>
<keyword id="KW-0411">Iron-sulfur</keyword>
<keyword id="KW-0479">Metal-binding</keyword>
<keyword id="KW-0662">Pyridine nucleotide biosynthesis</keyword>
<keyword id="KW-0808">Transferase</keyword>
<name>NADA_SULSY</name>
<evidence type="ECO:0000255" key="1">
    <source>
        <dbReference type="HAMAP-Rule" id="MF_00568"/>
    </source>
</evidence>
<organism>
    <name type="scientific">Sulfurihydrogenibium sp. (strain YO3AOP1)</name>
    <dbReference type="NCBI Taxonomy" id="436114"/>
    <lineage>
        <taxon>Bacteria</taxon>
        <taxon>Pseudomonadati</taxon>
        <taxon>Aquificota</taxon>
        <taxon>Aquificia</taxon>
        <taxon>Aquificales</taxon>
        <taxon>Hydrogenothermaceae</taxon>
        <taxon>Sulfurihydrogenibium</taxon>
    </lineage>
</organism>
<feature type="chain" id="PRO_1000129443" description="Quinolinate synthase">
    <location>
        <begin position="1"/>
        <end position="308"/>
    </location>
</feature>
<feature type="binding site" evidence="1">
    <location>
        <position position="24"/>
    </location>
    <ligand>
        <name>iminosuccinate</name>
        <dbReference type="ChEBI" id="CHEBI:77875"/>
    </ligand>
</feature>
<feature type="binding site" evidence="1">
    <location>
        <position position="41"/>
    </location>
    <ligand>
        <name>iminosuccinate</name>
        <dbReference type="ChEBI" id="CHEBI:77875"/>
    </ligand>
</feature>
<feature type="binding site" evidence="1">
    <location>
        <position position="86"/>
    </location>
    <ligand>
        <name>[4Fe-4S] cluster</name>
        <dbReference type="ChEBI" id="CHEBI:49883"/>
    </ligand>
</feature>
<feature type="binding site" evidence="1">
    <location>
        <begin position="112"/>
        <end position="114"/>
    </location>
    <ligand>
        <name>iminosuccinate</name>
        <dbReference type="ChEBI" id="CHEBI:77875"/>
    </ligand>
</feature>
<feature type="binding site" evidence="1">
    <location>
        <position position="129"/>
    </location>
    <ligand>
        <name>iminosuccinate</name>
        <dbReference type="ChEBI" id="CHEBI:77875"/>
    </ligand>
</feature>
<feature type="binding site" evidence="1">
    <location>
        <position position="172"/>
    </location>
    <ligand>
        <name>[4Fe-4S] cluster</name>
        <dbReference type="ChEBI" id="CHEBI:49883"/>
    </ligand>
</feature>
<feature type="binding site" evidence="1">
    <location>
        <begin position="198"/>
        <end position="200"/>
    </location>
    <ligand>
        <name>iminosuccinate</name>
        <dbReference type="ChEBI" id="CHEBI:77875"/>
    </ligand>
</feature>
<feature type="binding site" evidence="1">
    <location>
        <position position="215"/>
    </location>
    <ligand>
        <name>iminosuccinate</name>
        <dbReference type="ChEBI" id="CHEBI:77875"/>
    </ligand>
</feature>
<feature type="binding site" evidence="1">
    <location>
        <position position="265"/>
    </location>
    <ligand>
        <name>[4Fe-4S] cluster</name>
        <dbReference type="ChEBI" id="CHEBI:49883"/>
    </ligand>
</feature>
<gene>
    <name evidence="1" type="primary">nadA</name>
    <name type="ordered locus">SYO3AOP1_0943</name>
</gene>
<reference key="1">
    <citation type="journal article" date="2009" name="J. Bacteriol.">
        <title>Complete and draft genome sequences of six members of the Aquificales.</title>
        <authorList>
            <person name="Reysenbach A.-L."/>
            <person name="Hamamura N."/>
            <person name="Podar M."/>
            <person name="Griffiths E."/>
            <person name="Ferreira S."/>
            <person name="Hochstein R."/>
            <person name="Heidelberg J."/>
            <person name="Johnson J."/>
            <person name="Mead D."/>
            <person name="Pohorille A."/>
            <person name="Sarmiento M."/>
            <person name="Schweighofer K."/>
            <person name="Seshadri R."/>
            <person name="Voytek M.A."/>
        </authorList>
    </citation>
    <scope>NUCLEOTIDE SEQUENCE [LARGE SCALE GENOMIC DNA]</scope>
    <source>
        <strain>YO3AOP1</strain>
    </source>
</reference>
<accession>B2V9E3</accession>
<dbReference type="EC" id="2.5.1.72" evidence="1"/>
<dbReference type="EMBL" id="CP001080">
    <property type="protein sequence ID" value="ACD66566.1"/>
    <property type="molecule type" value="Genomic_DNA"/>
</dbReference>
<dbReference type="RefSeq" id="WP_012459637.1">
    <property type="nucleotide sequence ID" value="NC_010730.1"/>
</dbReference>
<dbReference type="SMR" id="B2V9E3"/>
<dbReference type="STRING" id="436114.SYO3AOP1_0943"/>
<dbReference type="KEGG" id="sul:SYO3AOP1_0943"/>
<dbReference type="eggNOG" id="COG0379">
    <property type="taxonomic scope" value="Bacteria"/>
</dbReference>
<dbReference type="HOGENOM" id="CLU_047382_0_0_0"/>
<dbReference type="UniPathway" id="UPA00253">
    <property type="reaction ID" value="UER00327"/>
</dbReference>
<dbReference type="GO" id="GO:0005829">
    <property type="term" value="C:cytosol"/>
    <property type="evidence" value="ECO:0007669"/>
    <property type="project" value="TreeGrafter"/>
</dbReference>
<dbReference type="GO" id="GO:0051539">
    <property type="term" value="F:4 iron, 4 sulfur cluster binding"/>
    <property type="evidence" value="ECO:0007669"/>
    <property type="project" value="UniProtKB-KW"/>
</dbReference>
<dbReference type="GO" id="GO:0046872">
    <property type="term" value="F:metal ion binding"/>
    <property type="evidence" value="ECO:0007669"/>
    <property type="project" value="UniProtKB-KW"/>
</dbReference>
<dbReference type="GO" id="GO:0008987">
    <property type="term" value="F:quinolinate synthetase A activity"/>
    <property type="evidence" value="ECO:0007669"/>
    <property type="project" value="UniProtKB-UniRule"/>
</dbReference>
<dbReference type="GO" id="GO:0034628">
    <property type="term" value="P:'de novo' NAD biosynthetic process from L-aspartate"/>
    <property type="evidence" value="ECO:0007669"/>
    <property type="project" value="TreeGrafter"/>
</dbReference>
<dbReference type="FunFam" id="3.40.50.10800:FF:000002">
    <property type="entry name" value="Quinolinate synthase A"/>
    <property type="match status" value="1"/>
</dbReference>
<dbReference type="Gene3D" id="3.40.50.10800">
    <property type="entry name" value="NadA-like"/>
    <property type="match status" value="3"/>
</dbReference>
<dbReference type="HAMAP" id="MF_00568">
    <property type="entry name" value="NadA_type2"/>
    <property type="match status" value="1"/>
</dbReference>
<dbReference type="InterPro" id="IPR003473">
    <property type="entry name" value="NadA"/>
</dbReference>
<dbReference type="InterPro" id="IPR036094">
    <property type="entry name" value="NadA_sf"/>
</dbReference>
<dbReference type="InterPro" id="IPR023066">
    <property type="entry name" value="Quinolinate_synth_type2"/>
</dbReference>
<dbReference type="NCBIfam" id="TIGR00550">
    <property type="entry name" value="nadA"/>
    <property type="match status" value="1"/>
</dbReference>
<dbReference type="NCBIfam" id="NF006878">
    <property type="entry name" value="PRK09375.1-2"/>
    <property type="match status" value="1"/>
</dbReference>
<dbReference type="PANTHER" id="PTHR30573:SF0">
    <property type="entry name" value="QUINOLINATE SYNTHASE, CHLOROPLASTIC"/>
    <property type="match status" value="1"/>
</dbReference>
<dbReference type="PANTHER" id="PTHR30573">
    <property type="entry name" value="QUINOLINATE SYNTHETASE A"/>
    <property type="match status" value="1"/>
</dbReference>
<dbReference type="Pfam" id="PF02445">
    <property type="entry name" value="NadA"/>
    <property type="match status" value="1"/>
</dbReference>
<dbReference type="SUPFAM" id="SSF142754">
    <property type="entry name" value="NadA-like"/>
    <property type="match status" value="1"/>
</dbReference>